<proteinExistence type="inferred from homology"/>
<evidence type="ECO:0000250" key="1">
    <source>
        <dbReference type="UniProtKB" id="P00395"/>
    </source>
</evidence>
<evidence type="ECO:0000250" key="2">
    <source>
        <dbReference type="UniProtKB" id="P00396"/>
    </source>
</evidence>
<evidence type="ECO:0000250" key="3">
    <source>
        <dbReference type="UniProtKB" id="P00401"/>
    </source>
</evidence>
<evidence type="ECO:0000305" key="4"/>
<gene>
    <name type="primary">MT-CO1</name>
    <name type="synonym">COI</name>
    <name type="synonym">COXI</name>
    <name type="synonym">MTCO1</name>
</gene>
<feature type="chain" id="PRO_0000183322" description="Cytochrome c oxidase subunit 1">
    <location>
        <begin position="1"/>
        <end position="513"/>
    </location>
</feature>
<feature type="topological domain" description="Mitochondrial matrix" evidence="2">
    <location>
        <begin position="1"/>
        <end position="11"/>
    </location>
</feature>
<feature type="transmembrane region" description="Helical; Name=I" evidence="2">
    <location>
        <begin position="12"/>
        <end position="40"/>
    </location>
</feature>
<feature type="topological domain" description="Mitochondrial intermembrane" evidence="2">
    <location>
        <begin position="41"/>
        <end position="50"/>
    </location>
</feature>
<feature type="transmembrane region" description="Helical; Name=II" evidence="2">
    <location>
        <begin position="51"/>
        <end position="86"/>
    </location>
</feature>
<feature type="topological domain" description="Mitochondrial matrix" evidence="2">
    <location>
        <begin position="87"/>
        <end position="94"/>
    </location>
</feature>
<feature type="transmembrane region" description="Helical; Name=III" evidence="2">
    <location>
        <begin position="95"/>
        <end position="117"/>
    </location>
</feature>
<feature type="topological domain" description="Mitochondrial intermembrane" evidence="2">
    <location>
        <begin position="118"/>
        <end position="140"/>
    </location>
</feature>
<feature type="transmembrane region" description="Helical; Name=IV" evidence="2">
    <location>
        <begin position="141"/>
        <end position="170"/>
    </location>
</feature>
<feature type="topological domain" description="Mitochondrial matrix" evidence="2">
    <location>
        <begin position="171"/>
        <end position="182"/>
    </location>
</feature>
<feature type="transmembrane region" description="Helical; Name=V" evidence="2">
    <location>
        <begin position="183"/>
        <end position="212"/>
    </location>
</feature>
<feature type="topological domain" description="Mitochondrial intermembrane" evidence="2">
    <location>
        <begin position="213"/>
        <end position="227"/>
    </location>
</feature>
<feature type="transmembrane region" description="Helical; Name=VI" evidence="2">
    <location>
        <begin position="228"/>
        <end position="261"/>
    </location>
</feature>
<feature type="topological domain" description="Mitochondrial matrix" evidence="2">
    <location>
        <begin position="262"/>
        <end position="269"/>
    </location>
</feature>
<feature type="transmembrane region" description="Helical; Name=VII" evidence="2">
    <location>
        <begin position="270"/>
        <end position="286"/>
    </location>
</feature>
<feature type="topological domain" description="Mitochondrial intermembrane" evidence="2">
    <location>
        <begin position="287"/>
        <end position="298"/>
    </location>
</feature>
<feature type="transmembrane region" description="Helical; Name=VIII" evidence="2">
    <location>
        <begin position="299"/>
        <end position="327"/>
    </location>
</feature>
<feature type="topological domain" description="Mitochondrial matrix" evidence="2">
    <location>
        <begin position="328"/>
        <end position="335"/>
    </location>
</feature>
<feature type="transmembrane region" description="Helical; Name=IX" evidence="2">
    <location>
        <begin position="336"/>
        <end position="357"/>
    </location>
</feature>
<feature type="topological domain" description="Mitochondrial intermembrane" evidence="2">
    <location>
        <begin position="358"/>
        <end position="370"/>
    </location>
</feature>
<feature type="transmembrane region" description="Helical; Name=X" evidence="2">
    <location>
        <begin position="371"/>
        <end position="400"/>
    </location>
</feature>
<feature type="topological domain" description="Mitochondrial matrix" evidence="2">
    <location>
        <begin position="401"/>
        <end position="406"/>
    </location>
</feature>
<feature type="transmembrane region" description="Helical; Name=XI" evidence="2">
    <location>
        <begin position="407"/>
        <end position="433"/>
    </location>
</feature>
<feature type="topological domain" description="Mitochondrial intermembrane" evidence="2">
    <location>
        <begin position="434"/>
        <end position="446"/>
    </location>
</feature>
<feature type="transmembrane region" description="Helical; Name=XII" evidence="2">
    <location>
        <begin position="447"/>
        <end position="478"/>
    </location>
</feature>
<feature type="topological domain" description="Mitochondrial matrix" evidence="2">
    <location>
        <begin position="479"/>
        <end position="513"/>
    </location>
</feature>
<feature type="binding site" evidence="2">
    <location>
        <position position="40"/>
    </location>
    <ligand>
        <name>Na(+)</name>
        <dbReference type="ChEBI" id="CHEBI:29101"/>
    </ligand>
</feature>
<feature type="binding site" evidence="2">
    <location>
        <position position="45"/>
    </location>
    <ligand>
        <name>Na(+)</name>
        <dbReference type="ChEBI" id="CHEBI:29101"/>
    </ligand>
</feature>
<feature type="binding site" description="axial binding residue" evidence="2">
    <location>
        <position position="61"/>
    </location>
    <ligand>
        <name>Fe(II)-heme a</name>
        <dbReference type="ChEBI" id="CHEBI:61715"/>
        <note>low-spin</note>
    </ligand>
    <ligandPart>
        <name>Fe</name>
        <dbReference type="ChEBI" id="CHEBI:18248"/>
    </ligandPart>
</feature>
<feature type="binding site" evidence="2">
    <location>
        <position position="240"/>
    </location>
    <ligand>
        <name>Cu cation</name>
        <dbReference type="ChEBI" id="CHEBI:23378"/>
        <label>B</label>
    </ligand>
</feature>
<feature type="binding site" evidence="2">
    <location>
        <position position="244"/>
    </location>
    <ligand>
        <name>O2</name>
        <dbReference type="ChEBI" id="CHEBI:15379"/>
    </ligand>
</feature>
<feature type="binding site" evidence="2">
    <location>
        <position position="290"/>
    </location>
    <ligand>
        <name>Cu cation</name>
        <dbReference type="ChEBI" id="CHEBI:23378"/>
        <label>B</label>
    </ligand>
</feature>
<feature type="binding site" evidence="2">
    <location>
        <position position="291"/>
    </location>
    <ligand>
        <name>Cu cation</name>
        <dbReference type="ChEBI" id="CHEBI:23378"/>
        <label>B</label>
    </ligand>
</feature>
<feature type="binding site" evidence="2">
    <location>
        <position position="368"/>
    </location>
    <ligand>
        <name>Mg(2+)</name>
        <dbReference type="ChEBI" id="CHEBI:18420"/>
        <note>ligand shared with MT-CO2</note>
    </ligand>
</feature>
<feature type="binding site" evidence="2">
    <location>
        <position position="369"/>
    </location>
    <ligand>
        <name>Mg(2+)</name>
        <dbReference type="ChEBI" id="CHEBI:18420"/>
        <note>ligand shared with MT-CO2</note>
    </ligand>
</feature>
<feature type="binding site" description="axial binding residue" evidence="2">
    <location>
        <position position="376"/>
    </location>
    <ligand>
        <name>heme a3</name>
        <dbReference type="ChEBI" id="CHEBI:83282"/>
        <note>high-spin</note>
    </ligand>
    <ligandPart>
        <name>Fe</name>
        <dbReference type="ChEBI" id="CHEBI:18248"/>
    </ligandPart>
</feature>
<feature type="binding site" description="axial binding residue" evidence="2">
    <location>
        <position position="378"/>
    </location>
    <ligand>
        <name>Fe(II)-heme a</name>
        <dbReference type="ChEBI" id="CHEBI:61715"/>
        <note>low-spin</note>
    </ligand>
    <ligandPart>
        <name>Fe</name>
        <dbReference type="ChEBI" id="CHEBI:18248"/>
    </ligandPart>
</feature>
<feature type="binding site" evidence="2">
    <location>
        <position position="441"/>
    </location>
    <ligand>
        <name>Na(+)</name>
        <dbReference type="ChEBI" id="CHEBI:29101"/>
    </ligand>
</feature>
<feature type="cross-link" description="1'-histidyl-3'-tyrosine (His-Tyr)" evidence="2">
    <location>
        <begin position="240"/>
        <end position="244"/>
    </location>
</feature>
<keyword id="KW-0106">Calcium</keyword>
<keyword id="KW-0186">Copper</keyword>
<keyword id="KW-0249">Electron transport</keyword>
<keyword id="KW-0349">Heme</keyword>
<keyword id="KW-0408">Iron</keyword>
<keyword id="KW-0460">Magnesium</keyword>
<keyword id="KW-0472">Membrane</keyword>
<keyword id="KW-0479">Metal-binding</keyword>
<keyword id="KW-0496">Mitochondrion</keyword>
<keyword id="KW-0999">Mitochondrion inner membrane</keyword>
<keyword id="KW-0679">Respiratory chain</keyword>
<keyword id="KW-0915">Sodium</keyword>
<keyword id="KW-1278">Translocase</keyword>
<keyword id="KW-0812">Transmembrane</keyword>
<keyword id="KW-1133">Transmembrane helix</keyword>
<keyword id="KW-0813">Transport</keyword>
<protein>
    <recommendedName>
        <fullName>Cytochrome c oxidase subunit 1</fullName>
        <ecNumber>7.1.1.9</ecNumber>
    </recommendedName>
    <alternativeName>
        <fullName>Cytochrome c oxidase polypeptide I</fullName>
    </alternativeName>
</protein>
<accession>P41310</accession>
<reference key="1">
    <citation type="journal article" date="1994" name="Genetics">
        <title>The marsupial mitochondrial genome and the evolution of placental mammals.</title>
        <authorList>
            <person name="Janke A."/>
            <person name="Feldmaier-Fuchs G."/>
            <person name="Thomas K."/>
            <person name="von Haeseler A."/>
            <person name="Paabo S."/>
        </authorList>
    </citation>
    <scope>NUCLEOTIDE SEQUENCE [GENOMIC DNA]</scope>
    <source>
        <tissue>Liver</tissue>
    </source>
</reference>
<geneLocation type="mitochondrion"/>
<sequence>MFINRWLFSTNHKDIGTLYLLFGAWAGMVGTALSLLIRAELGQPGTLIGDDQIYNVIVTAHAFIMIFFMVMPIMIGGFGNWLVPLMIGAPDMAFPRMNNMSFWLLPPSFLLLLASSTIEAGAGTGWTVYPPLAGNLAHAGASVDLAIFSLHLAGISSILGAINFITTIINMKPPAMSQYQTPLFVWSVMITAVLLLLSLPVLAAGITMLLTDRNLNTTFFDPAGGGDPILYQHLFWFFGHPEVYILILPGFGMISHIVTYYSGKKEPFGYMGMVWAMMSIGFLGFIVWAHHMFTVGLDVDTRAYFTSATMIIAIPTGVKVFSWLATLHGGNIKWSPAMLWALGFIFLFTIGGLTGIVLANSSLDIVLHDTYYVVAHFHYVLSMGAVFAIMGGFVHWFPLFTGYMLNDMWAKIHFFIMFVGVNLTFFPQHFLGLSGMPRRYSDYPDAYTMWNVVSSIGSFISLTAVILMVFIIWEAFASKREVLDVELTTTNIEWLYGCPPPYHTFEQPVFIKA</sequence>
<dbReference type="EC" id="7.1.1.9"/>
<dbReference type="EMBL" id="Z29573">
    <property type="protein sequence ID" value="CAA82679.1"/>
    <property type="molecule type" value="Genomic_DNA"/>
</dbReference>
<dbReference type="PIR" id="S47872">
    <property type="entry name" value="S47872"/>
</dbReference>
<dbReference type="SMR" id="P41310"/>
<dbReference type="CTD" id="4512"/>
<dbReference type="UniPathway" id="UPA00705"/>
<dbReference type="GO" id="GO:0005743">
    <property type="term" value="C:mitochondrial inner membrane"/>
    <property type="evidence" value="ECO:0007669"/>
    <property type="project" value="UniProtKB-SubCell"/>
</dbReference>
<dbReference type="GO" id="GO:0045277">
    <property type="term" value="C:respiratory chain complex IV"/>
    <property type="evidence" value="ECO:0000250"/>
    <property type="project" value="UniProtKB"/>
</dbReference>
<dbReference type="GO" id="GO:0004129">
    <property type="term" value="F:cytochrome-c oxidase activity"/>
    <property type="evidence" value="ECO:0007669"/>
    <property type="project" value="UniProtKB-EC"/>
</dbReference>
<dbReference type="GO" id="GO:0020037">
    <property type="term" value="F:heme binding"/>
    <property type="evidence" value="ECO:0007669"/>
    <property type="project" value="InterPro"/>
</dbReference>
<dbReference type="GO" id="GO:0046872">
    <property type="term" value="F:metal ion binding"/>
    <property type="evidence" value="ECO:0007669"/>
    <property type="project" value="UniProtKB-KW"/>
</dbReference>
<dbReference type="GO" id="GO:0015990">
    <property type="term" value="P:electron transport coupled proton transport"/>
    <property type="evidence" value="ECO:0007669"/>
    <property type="project" value="TreeGrafter"/>
</dbReference>
<dbReference type="GO" id="GO:0006123">
    <property type="term" value="P:mitochondrial electron transport, cytochrome c to oxygen"/>
    <property type="evidence" value="ECO:0007669"/>
    <property type="project" value="TreeGrafter"/>
</dbReference>
<dbReference type="CDD" id="cd01663">
    <property type="entry name" value="Cyt_c_Oxidase_I"/>
    <property type="match status" value="1"/>
</dbReference>
<dbReference type="FunFam" id="1.20.210.10:FF:000001">
    <property type="entry name" value="Cytochrome c oxidase subunit 1"/>
    <property type="match status" value="1"/>
</dbReference>
<dbReference type="Gene3D" id="1.20.210.10">
    <property type="entry name" value="Cytochrome c oxidase-like, subunit I domain"/>
    <property type="match status" value="1"/>
</dbReference>
<dbReference type="InterPro" id="IPR023616">
    <property type="entry name" value="Cyt_c_oxase-like_su1_dom"/>
</dbReference>
<dbReference type="InterPro" id="IPR036927">
    <property type="entry name" value="Cyt_c_oxase-like_su1_sf"/>
</dbReference>
<dbReference type="InterPro" id="IPR000883">
    <property type="entry name" value="Cyt_C_Oxase_1"/>
</dbReference>
<dbReference type="InterPro" id="IPR023615">
    <property type="entry name" value="Cyt_c_Oxase_su1_BS"/>
</dbReference>
<dbReference type="InterPro" id="IPR033944">
    <property type="entry name" value="Cyt_c_oxase_su1_dom"/>
</dbReference>
<dbReference type="PANTHER" id="PTHR10422">
    <property type="entry name" value="CYTOCHROME C OXIDASE SUBUNIT 1"/>
    <property type="match status" value="1"/>
</dbReference>
<dbReference type="PANTHER" id="PTHR10422:SF18">
    <property type="entry name" value="CYTOCHROME C OXIDASE SUBUNIT 1"/>
    <property type="match status" value="1"/>
</dbReference>
<dbReference type="Pfam" id="PF00115">
    <property type="entry name" value="COX1"/>
    <property type="match status" value="1"/>
</dbReference>
<dbReference type="PRINTS" id="PR01165">
    <property type="entry name" value="CYCOXIDASEI"/>
</dbReference>
<dbReference type="SUPFAM" id="SSF81442">
    <property type="entry name" value="Cytochrome c oxidase subunit I-like"/>
    <property type="match status" value="1"/>
</dbReference>
<dbReference type="PROSITE" id="PS50855">
    <property type="entry name" value="COX1"/>
    <property type="match status" value="1"/>
</dbReference>
<dbReference type="PROSITE" id="PS00077">
    <property type="entry name" value="COX1_CUB"/>
    <property type="match status" value="1"/>
</dbReference>
<comment type="function">
    <text evidence="3">Component of the cytochrome c oxidase, the last enzyme in the mitochondrial electron transport chain which drives oxidative phosphorylation. The respiratory chain contains 3 multisubunit complexes succinate dehydrogenase (complex II, CII), ubiquinol-cytochrome c oxidoreductase (cytochrome b-c1 complex, complex III, CIII) and cytochrome c oxidase (complex IV, CIV), that cooperate to transfer electrons derived from NADH and succinate to molecular oxygen, creating an electrochemical gradient over the inner membrane that drives transmembrane transport and the ATP synthase. Cytochrome c oxidase is the component of the respiratory chain that catalyzes the reduction of oxygen to water. Electrons originating from reduced cytochrome c in the intermembrane space (IMS) are transferred via the dinuclear copper A center (CU(A)) of subunit 2 and heme A of subunit 1 to the active site in subunit 1, a binuclear center (BNC) formed by heme A3 and copper B (CU(B)). The BNC reduces molecular oxygen to 2 water molecules using 4 electrons from cytochrome c in the IMS and 4 protons from the mitochondrial matrix.</text>
</comment>
<comment type="catalytic activity">
    <reaction evidence="3">
        <text>4 Fe(II)-[cytochrome c] + O2 + 8 H(+)(in) = 4 Fe(III)-[cytochrome c] + 2 H2O + 4 H(+)(out)</text>
        <dbReference type="Rhea" id="RHEA:11436"/>
        <dbReference type="Rhea" id="RHEA-COMP:10350"/>
        <dbReference type="Rhea" id="RHEA-COMP:14399"/>
        <dbReference type="ChEBI" id="CHEBI:15377"/>
        <dbReference type="ChEBI" id="CHEBI:15378"/>
        <dbReference type="ChEBI" id="CHEBI:15379"/>
        <dbReference type="ChEBI" id="CHEBI:29033"/>
        <dbReference type="ChEBI" id="CHEBI:29034"/>
        <dbReference type="EC" id="7.1.1.9"/>
    </reaction>
    <physiologicalReaction direction="left-to-right" evidence="3">
        <dbReference type="Rhea" id="RHEA:11437"/>
    </physiologicalReaction>
</comment>
<comment type="cofactor">
    <cofactor evidence="2">
        <name>heme</name>
        <dbReference type="ChEBI" id="CHEBI:30413"/>
    </cofactor>
    <text evidence="2">Binds 2 heme A groups non-covalently per subunit.</text>
</comment>
<comment type="cofactor">
    <cofactor evidence="2">
        <name>Cu cation</name>
        <dbReference type="ChEBI" id="CHEBI:23378"/>
    </cofactor>
    <text evidence="2">Binds a copper B center.</text>
</comment>
<comment type="pathway">
    <text evidence="3">Energy metabolism; oxidative phosphorylation.</text>
</comment>
<comment type="subunit">
    <text evidence="1 2">Component of the cytochrome c oxidase (complex IV, CIV), a multisubunit enzyme composed of 14 subunits. The complex is composed of a catalytic core of 3 subunits MT-CO1, MT-CO2 and MT-CO3, encoded in the mitochondrial DNA, and 11 supernumerary subunits COX4I, COX5A, COX5B, COX6A, COX6B, COX6C, COX7A, COX7B, COX7C, COX8 and NDUFA4, which are encoded in the nuclear genome. The complex exists as a monomer or a dimer and forms supercomplexes (SCs) in the inner mitochondrial membrane with NADH-ubiquinone oxidoreductase (complex I, CI) and ubiquinol-cytochrome c oxidoreductase (cytochrome b-c1 complex, complex III, CIII), resulting in different assemblies (supercomplex SCI(1)III(2)IV(1) and megacomplex MCI(2)III(2)IV(2)) (By similarity). As a newly synthesized protein, rapidly incorporates into a multi-subunit assembly intermediate in the inner membrane, called MITRAC (mitochondrial translation regulation assembly intermediate of cytochrome c oxidase) complex, whose core components are COA3/MITRAC12 and COX14. Within the MITRAC complex, interacts with COA3 and with SMIM20/MITRAC7; the interaction with SMIM20 stabilizes the newly synthesized MT-CO1 and prevents its premature turnover. Interacts with TMEM177 in a COX20-dependent manner (By similarity).</text>
</comment>
<comment type="subcellular location">
    <subcellularLocation>
        <location evidence="2">Mitochondrion inner membrane</location>
        <topology evidence="2">Multi-pass membrane protein</topology>
    </subcellularLocation>
</comment>
<comment type="similarity">
    <text evidence="4">Belongs to the heme-copper respiratory oxidase family.</text>
</comment>
<name>COX1_DIDVI</name>
<organism>
    <name type="scientific">Didelphis virginiana</name>
    <name type="common">North American opossum</name>
    <name type="synonym">Didelphis marsupialis virginiana</name>
    <dbReference type="NCBI Taxonomy" id="9267"/>
    <lineage>
        <taxon>Eukaryota</taxon>
        <taxon>Metazoa</taxon>
        <taxon>Chordata</taxon>
        <taxon>Craniata</taxon>
        <taxon>Vertebrata</taxon>
        <taxon>Euteleostomi</taxon>
        <taxon>Mammalia</taxon>
        <taxon>Metatheria</taxon>
        <taxon>Didelphimorphia</taxon>
        <taxon>Didelphidae</taxon>
        <taxon>Didelphis</taxon>
    </lineage>
</organism>